<gene>
    <name type="ORF">ACLA_026150</name>
</gene>
<keyword id="KW-0963">Cytoplasm</keyword>
<keyword id="KW-0396">Initiation factor</keyword>
<keyword id="KW-0648">Protein biosynthesis</keyword>
<keyword id="KW-1185">Reference proteome</keyword>
<sequence>MADTDSFLHLARPLGPVAVGSAPTTAPLNVVIQPQAIFSILDHSLRRNADQERVIGTLLGTRSEDGTEVEIRSTFAVGHTETTDQVEVDMEYQKQMLALHLKANPKEVLVGWYATSSELNTFSALIQNFYSGQGDGTWPHPAVHLTVSTEAGKDIETRAYISAPVGVTAERAADSAAFIPVPYEIRYGEAEKSGLEAISSARDAENRATNIFTDIEALERAIEDVLGMIDRVSRYVESVIDEEAPASTALGQFLLNTLALAPKVEPADIERDFNNHIQDVLVVSYLANTIRTQMELSNRLATAQLTLGGESGGAESGAQRGQRGGKGGRGGQQRNQERGAEEARA</sequence>
<comment type="function">
    <text evidence="1">Component of the eukaryotic translation initiation factor 3 (eIF-3) complex, which is involved in protein synthesis of a specialized repertoire of mRNAs and, together with other initiation factors, stimulates binding of mRNA and methionyl-tRNAi to the 40S ribosome. The eIF-3 complex specifically targets and initiates translation of a subset of mRNAs involved in cell proliferation.</text>
</comment>
<comment type="subunit">
    <text evidence="1">Component of the eukaryotic translation initiation factor 3 (eIF-3) complex.</text>
</comment>
<comment type="subcellular location">
    <subcellularLocation>
        <location evidence="1">Cytoplasm</location>
    </subcellularLocation>
</comment>
<comment type="similarity">
    <text evidence="1">Belongs to the eIF-3 subunit F family.</text>
</comment>
<feature type="chain" id="PRO_0000364321" description="Eukaryotic translation initiation factor 3 subunit F">
    <location>
        <begin position="1"/>
        <end position="345"/>
    </location>
</feature>
<feature type="domain" description="MPN" evidence="2">
    <location>
        <begin position="30"/>
        <end position="166"/>
    </location>
</feature>
<feature type="region of interest" description="Disordered" evidence="3">
    <location>
        <begin position="308"/>
        <end position="345"/>
    </location>
</feature>
<feature type="compositionally biased region" description="Gly residues" evidence="3">
    <location>
        <begin position="322"/>
        <end position="331"/>
    </location>
</feature>
<feature type="compositionally biased region" description="Basic and acidic residues" evidence="3">
    <location>
        <begin position="335"/>
        <end position="345"/>
    </location>
</feature>
<accession>A1CQH7</accession>
<protein>
    <recommendedName>
        <fullName evidence="1">Eukaryotic translation initiation factor 3 subunit F</fullName>
        <shortName evidence="1">eIF3f</shortName>
    </recommendedName>
</protein>
<proteinExistence type="inferred from homology"/>
<evidence type="ECO:0000255" key="1">
    <source>
        <dbReference type="HAMAP-Rule" id="MF_03005"/>
    </source>
</evidence>
<evidence type="ECO:0000255" key="2">
    <source>
        <dbReference type="PROSITE-ProRule" id="PRU01182"/>
    </source>
</evidence>
<evidence type="ECO:0000256" key="3">
    <source>
        <dbReference type="SAM" id="MobiDB-lite"/>
    </source>
</evidence>
<dbReference type="EMBL" id="DS027059">
    <property type="protein sequence ID" value="EAW07898.1"/>
    <property type="molecule type" value="Genomic_DNA"/>
</dbReference>
<dbReference type="RefSeq" id="XP_001269324.1">
    <property type="nucleotide sequence ID" value="XM_001269323.1"/>
</dbReference>
<dbReference type="SMR" id="A1CQH7"/>
<dbReference type="STRING" id="344612.A1CQH7"/>
<dbReference type="EnsemblFungi" id="EAW07898">
    <property type="protein sequence ID" value="EAW07898"/>
    <property type="gene ID" value="ACLA_026150"/>
</dbReference>
<dbReference type="GeneID" id="4702012"/>
<dbReference type="KEGG" id="act:ACLA_026150"/>
<dbReference type="VEuPathDB" id="FungiDB:ACLA_026150"/>
<dbReference type="eggNOG" id="KOG2975">
    <property type="taxonomic scope" value="Eukaryota"/>
</dbReference>
<dbReference type="HOGENOM" id="CLU_027018_0_0_1"/>
<dbReference type="OMA" id="EYFVHFH"/>
<dbReference type="OrthoDB" id="25498at2759"/>
<dbReference type="Proteomes" id="UP000006701">
    <property type="component" value="Unassembled WGS sequence"/>
</dbReference>
<dbReference type="GO" id="GO:0016282">
    <property type="term" value="C:eukaryotic 43S preinitiation complex"/>
    <property type="evidence" value="ECO:0007669"/>
    <property type="project" value="UniProtKB-UniRule"/>
</dbReference>
<dbReference type="GO" id="GO:0033290">
    <property type="term" value="C:eukaryotic 48S preinitiation complex"/>
    <property type="evidence" value="ECO:0007669"/>
    <property type="project" value="UniProtKB-UniRule"/>
</dbReference>
<dbReference type="GO" id="GO:0071540">
    <property type="term" value="C:eukaryotic translation initiation factor 3 complex, eIF3e"/>
    <property type="evidence" value="ECO:0007669"/>
    <property type="project" value="EnsemblFungi"/>
</dbReference>
<dbReference type="GO" id="GO:0071541">
    <property type="term" value="C:eukaryotic translation initiation factor 3 complex, eIF3m"/>
    <property type="evidence" value="ECO:0007669"/>
    <property type="project" value="EnsemblFungi"/>
</dbReference>
<dbReference type="GO" id="GO:0008237">
    <property type="term" value="F:metallopeptidase activity"/>
    <property type="evidence" value="ECO:0007669"/>
    <property type="project" value="InterPro"/>
</dbReference>
<dbReference type="GO" id="GO:0003743">
    <property type="term" value="F:translation initiation factor activity"/>
    <property type="evidence" value="ECO:0007669"/>
    <property type="project" value="UniProtKB-UniRule"/>
</dbReference>
<dbReference type="GO" id="GO:0031369">
    <property type="term" value="F:translation initiation factor binding"/>
    <property type="evidence" value="ECO:0007669"/>
    <property type="project" value="InterPro"/>
</dbReference>
<dbReference type="GO" id="GO:0001732">
    <property type="term" value="P:formation of cytoplasmic translation initiation complex"/>
    <property type="evidence" value="ECO:0007669"/>
    <property type="project" value="UniProtKB-UniRule"/>
</dbReference>
<dbReference type="CDD" id="cd08064">
    <property type="entry name" value="MPN_eIF3f"/>
    <property type="match status" value="1"/>
</dbReference>
<dbReference type="FunFam" id="3.40.140.10:FF:000019">
    <property type="entry name" value="Eukaryotic translation initiation factor 3 subunit F"/>
    <property type="match status" value="1"/>
</dbReference>
<dbReference type="Gene3D" id="3.40.140.10">
    <property type="entry name" value="Cytidine Deaminase, domain 2"/>
    <property type="match status" value="1"/>
</dbReference>
<dbReference type="HAMAP" id="MF_03005">
    <property type="entry name" value="eIF3f"/>
    <property type="match status" value="1"/>
</dbReference>
<dbReference type="InterPro" id="IPR027531">
    <property type="entry name" value="eIF3f"/>
</dbReference>
<dbReference type="InterPro" id="IPR024969">
    <property type="entry name" value="EIF3F/CSN6-like_C"/>
</dbReference>
<dbReference type="InterPro" id="IPR000555">
    <property type="entry name" value="JAMM/MPN+_dom"/>
</dbReference>
<dbReference type="InterPro" id="IPR037518">
    <property type="entry name" value="MPN"/>
</dbReference>
<dbReference type="PANTHER" id="PTHR10540:SF6">
    <property type="entry name" value="EUKARYOTIC TRANSLATION INITIATION FACTOR 3 SUBUNIT F"/>
    <property type="match status" value="1"/>
</dbReference>
<dbReference type="PANTHER" id="PTHR10540">
    <property type="entry name" value="EUKARYOTIC TRANSLATION INITIATION FACTOR 3 SUBUNIT F-RELATED"/>
    <property type="match status" value="1"/>
</dbReference>
<dbReference type="Pfam" id="PF01398">
    <property type="entry name" value="JAB"/>
    <property type="match status" value="1"/>
</dbReference>
<dbReference type="Pfam" id="PF13012">
    <property type="entry name" value="MitMem_reg"/>
    <property type="match status" value="1"/>
</dbReference>
<dbReference type="SMART" id="SM00232">
    <property type="entry name" value="JAB_MPN"/>
    <property type="match status" value="1"/>
</dbReference>
<dbReference type="PROSITE" id="PS50249">
    <property type="entry name" value="MPN"/>
    <property type="match status" value="1"/>
</dbReference>
<reference key="1">
    <citation type="journal article" date="2008" name="PLoS Genet.">
        <title>Genomic islands in the pathogenic filamentous fungus Aspergillus fumigatus.</title>
        <authorList>
            <person name="Fedorova N.D."/>
            <person name="Khaldi N."/>
            <person name="Joardar V.S."/>
            <person name="Maiti R."/>
            <person name="Amedeo P."/>
            <person name="Anderson M.J."/>
            <person name="Crabtree J."/>
            <person name="Silva J.C."/>
            <person name="Badger J.H."/>
            <person name="Albarraq A."/>
            <person name="Angiuoli S."/>
            <person name="Bussey H."/>
            <person name="Bowyer P."/>
            <person name="Cotty P.J."/>
            <person name="Dyer P.S."/>
            <person name="Egan A."/>
            <person name="Galens K."/>
            <person name="Fraser-Liggett C.M."/>
            <person name="Haas B.J."/>
            <person name="Inman J.M."/>
            <person name="Kent R."/>
            <person name="Lemieux S."/>
            <person name="Malavazi I."/>
            <person name="Orvis J."/>
            <person name="Roemer T."/>
            <person name="Ronning C.M."/>
            <person name="Sundaram J.P."/>
            <person name="Sutton G."/>
            <person name="Turner G."/>
            <person name="Venter J.C."/>
            <person name="White O.R."/>
            <person name="Whitty B.R."/>
            <person name="Youngman P."/>
            <person name="Wolfe K.H."/>
            <person name="Goldman G.H."/>
            <person name="Wortman J.R."/>
            <person name="Jiang B."/>
            <person name="Denning D.W."/>
            <person name="Nierman W.C."/>
        </authorList>
    </citation>
    <scope>NUCLEOTIDE SEQUENCE [LARGE SCALE GENOMIC DNA]</scope>
    <source>
        <strain>ATCC 1007 / CBS 513.65 / DSM 816 / NCTC 3887 / NRRL 1 / QM 1276 / 107</strain>
    </source>
</reference>
<name>EIF3F_ASPCL</name>
<organism>
    <name type="scientific">Aspergillus clavatus (strain ATCC 1007 / CBS 513.65 / DSM 816 / NCTC 3887 / NRRL 1 / QM 1276 / 107)</name>
    <dbReference type="NCBI Taxonomy" id="344612"/>
    <lineage>
        <taxon>Eukaryota</taxon>
        <taxon>Fungi</taxon>
        <taxon>Dikarya</taxon>
        <taxon>Ascomycota</taxon>
        <taxon>Pezizomycotina</taxon>
        <taxon>Eurotiomycetes</taxon>
        <taxon>Eurotiomycetidae</taxon>
        <taxon>Eurotiales</taxon>
        <taxon>Aspergillaceae</taxon>
        <taxon>Aspergillus</taxon>
        <taxon>Aspergillus subgen. Fumigati</taxon>
    </lineage>
</organism>